<keyword id="KW-1003">Cell membrane</keyword>
<keyword id="KW-0249">Electron transport</keyword>
<keyword id="KW-0349">Heme</keyword>
<keyword id="KW-0408">Iron</keyword>
<keyword id="KW-0472">Membrane</keyword>
<keyword id="KW-0479">Metal-binding</keyword>
<keyword id="KW-1185">Reference proteome</keyword>
<keyword id="KW-0677">Repeat</keyword>
<keyword id="KW-0679">Respiratory chain</keyword>
<keyword id="KW-1278">Translocase</keyword>
<keyword id="KW-0812">Transmembrane</keyword>
<keyword id="KW-1133">Transmembrane helix</keyword>
<keyword id="KW-0813">Transport</keyword>
<protein>
    <recommendedName>
        <fullName>Cytochrome bc1 complex cytochrome c subunit</fullName>
        <ecNumber evidence="1">7.1.1.8</ecNumber>
    </recommendedName>
    <alternativeName>
        <fullName>Cytochrome bc1 reductase complex subunit Qcrc</fullName>
    </alternativeName>
    <alternativeName>
        <fullName>Menaquinol--cytochrome c reductase cytochrome c subunit</fullName>
    </alternativeName>
</protein>
<gene>
    <name type="primary">qcrC</name>
    <name type="ordered locus">CE2084</name>
</gene>
<name>QCRC_COREF</name>
<feature type="chain" id="PRO_0000108446" description="Cytochrome bc1 complex cytochrome c subunit">
    <location>
        <begin position="1"/>
        <end position="296"/>
    </location>
</feature>
<feature type="transmembrane region" description="Helical" evidence="2">
    <location>
        <begin position="32"/>
        <end position="52"/>
    </location>
</feature>
<feature type="transmembrane region" description="Helical" evidence="2">
    <location>
        <begin position="274"/>
        <end position="294"/>
    </location>
</feature>
<feature type="domain" description="Cytochrome c 1" evidence="3">
    <location>
        <begin position="67"/>
        <end position="147"/>
    </location>
</feature>
<feature type="domain" description="Cytochrome c 2" evidence="3">
    <location>
        <begin position="177"/>
        <end position="255"/>
    </location>
</feature>
<feature type="region of interest" description="Disordered" evidence="4">
    <location>
        <begin position="1"/>
        <end position="27"/>
    </location>
</feature>
<feature type="compositionally biased region" description="Polar residues" evidence="4">
    <location>
        <begin position="1"/>
        <end position="19"/>
    </location>
</feature>
<feature type="binding site" description="covalent" evidence="3">
    <location>
        <position position="80"/>
    </location>
    <ligand>
        <name>heme c</name>
        <dbReference type="ChEBI" id="CHEBI:61717"/>
        <label>1</label>
    </ligand>
</feature>
<feature type="binding site" description="covalent" evidence="3">
    <location>
        <position position="83"/>
    </location>
    <ligand>
        <name>heme c</name>
        <dbReference type="ChEBI" id="CHEBI:61717"/>
        <label>1</label>
    </ligand>
</feature>
<feature type="binding site" description="axial binding residue" evidence="3">
    <location>
        <position position="84"/>
    </location>
    <ligand>
        <name>heme c</name>
        <dbReference type="ChEBI" id="CHEBI:61717"/>
        <label>1</label>
    </ligand>
    <ligandPart>
        <name>Fe</name>
        <dbReference type="ChEBI" id="CHEBI:18248"/>
    </ligandPart>
</feature>
<feature type="binding site" description="covalent" evidence="3">
    <location>
        <position position="190"/>
    </location>
    <ligand>
        <name>heme c</name>
        <dbReference type="ChEBI" id="CHEBI:61717"/>
        <label>2</label>
    </ligand>
</feature>
<feature type="binding site" description="covalent" evidence="3">
    <location>
        <position position="193"/>
    </location>
    <ligand>
        <name>heme c</name>
        <dbReference type="ChEBI" id="CHEBI:61717"/>
        <label>2</label>
    </ligand>
</feature>
<feature type="binding site" description="axial binding residue" evidence="3">
    <location>
        <position position="194"/>
    </location>
    <ligand>
        <name>heme c</name>
        <dbReference type="ChEBI" id="CHEBI:61717"/>
        <label>2</label>
    </ligand>
    <ligandPart>
        <name>Fe</name>
        <dbReference type="ChEBI" id="CHEBI:18248"/>
    </ligandPart>
</feature>
<comment type="function">
    <text evidence="1">Cytochrome c1 subunit of the cytochrome bc1 complex, an essential component of the respiratory electron transport chain required for ATP synthesis. The bc1 complex catalyzes the oxidation of menaquinol and the reduction of cytochrome c in the respiratory chain. The bc1 complex operates through a Q-cycle mechanism that couples electron transfer to generation of the proton gradient that drives ATP synthesis.</text>
</comment>
<comment type="catalytic activity">
    <reaction evidence="1">
        <text>a quinol + 2 Fe(III)-[cytochrome c](out) = a quinone + 2 Fe(II)-[cytochrome c](out) + 2 H(+)(out)</text>
        <dbReference type="Rhea" id="RHEA:11484"/>
        <dbReference type="Rhea" id="RHEA-COMP:10350"/>
        <dbReference type="Rhea" id="RHEA-COMP:14399"/>
        <dbReference type="ChEBI" id="CHEBI:15378"/>
        <dbReference type="ChEBI" id="CHEBI:24646"/>
        <dbReference type="ChEBI" id="CHEBI:29033"/>
        <dbReference type="ChEBI" id="CHEBI:29034"/>
        <dbReference type="ChEBI" id="CHEBI:132124"/>
        <dbReference type="EC" id="7.1.1.8"/>
    </reaction>
</comment>
<comment type="subunit">
    <text evidence="1">The cytochrome bc1 complex is composed of a cytochrome b (QcrB), the Rieske iron-sulfur protein (QcrA) and a diheme cytochrome c (QcrC) subunit. The bc1 complex forms a supercomplex with cytochrome c oxidase (cytochrome aa3).</text>
</comment>
<comment type="subcellular location">
    <subcellularLocation>
        <location evidence="2">Cell membrane</location>
        <topology evidence="2">Multi-pass membrane protein</topology>
    </subcellularLocation>
</comment>
<comment type="PTM">
    <text evidence="1">Binds 2 heme c groups covalently per subunit.</text>
</comment>
<dbReference type="EC" id="7.1.1.8" evidence="1"/>
<dbReference type="EMBL" id="BA000035">
    <property type="protein sequence ID" value="BAC18894.1"/>
    <property type="molecule type" value="Genomic_DNA"/>
</dbReference>
<dbReference type="RefSeq" id="WP_006768085.1">
    <property type="nucleotide sequence ID" value="NC_004369.1"/>
</dbReference>
<dbReference type="SMR" id="Q8FNR0"/>
<dbReference type="STRING" id="196164.gene:10742512"/>
<dbReference type="KEGG" id="cef:CE2084"/>
<dbReference type="eggNOG" id="COG2010">
    <property type="taxonomic scope" value="Bacteria"/>
</dbReference>
<dbReference type="HOGENOM" id="CLU_086567_0_0_11"/>
<dbReference type="Proteomes" id="UP000001409">
    <property type="component" value="Chromosome"/>
</dbReference>
<dbReference type="GO" id="GO:0005886">
    <property type="term" value="C:plasma membrane"/>
    <property type="evidence" value="ECO:0007669"/>
    <property type="project" value="UniProtKB-SubCell"/>
</dbReference>
<dbReference type="GO" id="GO:0020037">
    <property type="term" value="F:heme binding"/>
    <property type="evidence" value="ECO:0007669"/>
    <property type="project" value="InterPro"/>
</dbReference>
<dbReference type="GO" id="GO:0005506">
    <property type="term" value="F:iron ion binding"/>
    <property type="evidence" value="ECO:0007669"/>
    <property type="project" value="InterPro"/>
</dbReference>
<dbReference type="GO" id="GO:0008121">
    <property type="term" value="F:ubiquinol-cytochrome-c reductase activity"/>
    <property type="evidence" value="ECO:0007669"/>
    <property type="project" value="UniProtKB-EC"/>
</dbReference>
<dbReference type="Gene3D" id="1.10.760.10">
    <property type="entry name" value="Cytochrome c-like domain"/>
    <property type="match status" value="2"/>
</dbReference>
<dbReference type="InterPro" id="IPR009152">
    <property type="entry name" value="bc1_cytC-su"/>
</dbReference>
<dbReference type="InterPro" id="IPR009056">
    <property type="entry name" value="Cyt_c-like_dom"/>
</dbReference>
<dbReference type="InterPro" id="IPR036909">
    <property type="entry name" value="Cyt_c-like_dom_sf"/>
</dbReference>
<dbReference type="InterPro" id="IPR050597">
    <property type="entry name" value="Cytochrome_c_Oxidase_Subunit"/>
</dbReference>
<dbReference type="PANTHER" id="PTHR33751">
    <property type="entry name" value="CBB3-TYPE CYTOCHROME C OXIDASE SUBUNIT FIXP"/>
    <property type="match status" value="1"/>
</dbReference>
<dbReference type="PANTHER" id="PTHR33751:SF13">
    <property type="entry name" value="CYTOCHROME BC1 COMPLEX CYTOCHROME C SUBUNIT"/>
    <property type="match status" value="1"/>
</dbReference>
<dbReference type="Pfam" id="PF00034">
    <property type="entry name" value="Cytochrom_C"/>
    <property type="match status" value="1"/>
</dbReference>
<dbReference type="Pfam" id="PF13442">
    <property type="entry name" value="Cytochrome_CBB3"/>
    <property type="match status" value="1"/>
</dbReference>
<dbReference type="PIRSF" id="PIRSF000007">
    <property type="entry name" value="Ubiq_cycred_cyc"/>
    <property type="match status" value="1"/>
</dbReference>
<dbReference type="SUPFAM" id="SSF46626">
    <property type="entry name" value="Cytochrome c"/>
    <property type="match status" value="2"/>
</dbReference>
<dbReference type="PROSITE" id="PS51007">
    <property type="entry name" value="CYTC"/>
    <property type="match status" value="2"/>
</dbReference>
<sequence>MMETNPQTSEGAGKAQSSAKKVKNRRKLRRTVAGAMALTIGLSGAGILATAITPDAQIATAQRDDQALIAEGKDLYDVACITCHGMNLQGVQDRGPSLIGVGEGAVYFQVHSGRMPMQRNEAQASRKTPRYTEAQTLAIAAYVAANGGGPGLVYNEDGTLAMEELRGSNFDGQIDPLDVSRGGDLFRLNCASCHNFTGRGGALSSGKYAPVLDPANEQEIYQAMLTGPQNMPKFSDRQLSADEKKDIIAFIKSTKETPSPGGYSLGGLGPVSEGLFMWGIGIMVLIAAAMWIGSRS</sequence>
<proteinExistence type="inferred from homology"/>
<organism>
    <name type="scientific">Corynebacterium efficiens (strain DSM 44549 / YS-314 / AJ 12310 / JCM 11189 / NBRC 100395)</name>
    <dbReference type="NCBI Taxonomy" id="196164"/>
    <lineage>
        <taxon>Bacteria</taxon>
        <taxon>Bacillati</taxon>
        <taxon>Actinomycetota</taxon>
        <taxon>Actinomycetes</taxon>
        <taxon>Mycobacteriales</taxon>
        <taxon>Corynebacteriaceae</taxon>
        <taxon>Corynebacterium</taxon>
    </lineage>
</organism>
<reference key="1">
    <citation type="journal article" date="2003" name="Genome Res.">
        <title>Comparative complete genome sequence analysis of the amino acid replacements responsible for the thermostability of Corynebacterium efficiens.</title>
        <authorList>
            <person name="Nishio Y."/>
            <person name="Nakamura Y."/>
            <person name="Kawarabayasi Y."/>
            <person name="Usuda Y."/>
            <person name="Kimura E."/>
            <person name="Sugimoto S."/>
            <person name="Matsui K."/>
            <person name="Yamagishi A."/>
            <person name="Kikuchi H."/>
            <person name="Ikeo K."/>
            <person name="Gojobori T."/>
        </authorList>
    </citation>
    <scope>NUCLEOTIDE SEQUENCE [LARGE SCALE GENOMIC DNA]</scope>
    <source>
        <strain>DSM 44549 / YS-314 / AJ 12310 / JCM 11189 / NBRC 100395</strain>
    </source>
</reference>
<evidence type="ECO:0000250" key="1">
    <source>
        <dbReference type="UniProtKB" id="Q8NNK5"/>
    </source>
</evidence>
<evidence type="ECO:0000255" key="2"/>
<evidence type="ECO:0000255" key="3">
    <source>
        <dbReference type="PROSITE-ProRule" id="PRU00433"/>
    </source>
</evidence>
<evidence type="ECO:0000256" key="4">
    <source>
        <dbReference type="SAM" id="MobiDB-lite"/>
    </source>
</evidence>
<accession>Q8FNR0</accession>